<protein>
    <recommendedName>
        <fullName evidence="3">Decaprenylphosphoryl-2-keto-beta-D-erythro-pentose reductase</fullName>
        <ecNumber evidence="1">1.1.1.333</ecNumber>
    </recommendedName>
    <alternativeName>
        <fullName evidence="3">Decaprenyl-phospho-2'-keto-D-arabinose reductase</fullName>
    </alternativeName>
    <alternativeName>
        <fullName evidence="3">Decaprenylphospho-beta-D-erythro-pentofuranosid-2-ulose 2-reductase</fullName>
    </alternativeName>
    <alternativeName>
        <fullName evidence="3">Decaprenylphosphoryl-beta-D-ribofuranose 2'-epimerase subunit DprE2</fullName>
        <shortName evidence="3">Decaprenyl-phosphoribose 2'-epimerase subunit 2</shortName>
    </alternativeName>
    <alternativeName>
        <fullName evidence="3">NAD-dependent decaprenylphosphoryl-D-2-keto-erythropentose reductase</fullName>
    </alternativeName>
</protein>
<reference key="1">
    <citation type="journal article" date="2003" name="Proc. Natl. Acad. Sci. U.S.A.">
        <title>The complete genome sequence of Mycobacterium bovis.</title>
        <authorList>
            <person name="Garnier T."/>
            <person name="Eiglmeier K."/>
            <person name="Camus J.-C."/>
            <person name="Medina N."/>
            <person name="Mansoor H."/>
            <person name="Pryor M."/>
            <person name="Duthoy S."/>
            <person name="Grondin S."/>
            <person name="Lacroix C."/>
            <person name="Monsempe C."/>
            <person name="Simon S."/>
            <person name="Harris B."/>
            <person name="Atkin R."/>
            <person name="Doggett J."/>
            <person name="Mayes R."/>
            <person name="Keating L."/>
            <person name="Wheeler P.R."/>
            <person name="Parkhill J."/>
            <person name="Barrell B.G."/>
            <person name="Cole S.T."/>
            <person name="Gordon S.V."/>
            <person name="Hewinson R.G."/>
        </authorList>
    </citation>
    <scope>NUCLEOTIDE SEQUENCE [LARGE SCALE GENOMIC DNA]</scope>
    <source>
        <strain>ATCC BAA-935 / AF2122/97</strain>
    </source>
</reference>
<reference key="2">
    <citation type="journal article" date="2017" name="Genome Announc.">
        <title>Updated reference genome sequence and annotation of Mycobacterium bovis AF2122/97.</title>
        <authorList>
            <person name="Malone K.M."/>
            <person name="Farrell D."/>
            <person name="Stuber T.P."/>
            <person name="Schubert O.T."/>
            <person name="Aebersold R."/>
            <person name="Robbe-Austerman S."/>
            <person name="Gordon S.V."/>
        </authorList>
    </citation>
    <scope>NUCLEOTIDE SEQUENCE [LARGE SCALE GENOMIC DNA]</scope>
    <scope>GENOME REANNOTATION</scope>
    <source>
        <strain>ATCC BAA-935 / AF2122/97</strain>
    </source>
</reference>
<accession>P66784</accession>
<accession>A0A1R3Y587</accession>
<accession>P72057</accession>
<accession>X2BP85</accession>
<dbReference type="EC" id="1.1.1.333" evidence="1"/>
<dbReference type="EMBL" id="LT708304">
    <property type="protein sequence ID" value="SIU02449.1"/>
    <property type="molecule type" value="Genomic_DNA"/>
</dbReference>
<dbReference type="RefSeq" id="NP_857457.1">
    <property type="nucleotide sequence ID" value="NC_002945.3"/>
</dbReference>
<dbReference type="RefSeq" id="WP_003420632.1">
    <property type="nucleotide sequence ID" value="NC_002945.4"/>
</dbReference>
<dbReference type="SMR" id="P66784"/>
<dbReference type="KEGG" id="mbo:BQ2027_MB3820"/>
<dbReference type="PATRIC" id="fig|233413.5.peg.4178"/>
<dbReference type="UniPathway" id="UPA00963"/>
<dbReference type="Proteomes" id="UP000001419">
    <property type="component" value="Chromosome"/>
</dbReference>
<dbReference type="GO" id="GO:0042597">
    <property type="term" value="C:periplasmic space"/>
    <property type="evidence" value="ECO:0007669"/>
    <property type="project" value="UniProtKB-SubCell"/>
</dbReference>
<dbReference type="GO" id="GO:0016491">
    <property type="term" value="F:oxidoreductase activity"/>
    <property type="evidence" value="ECO:0007669"/>
    <property type="project" value="UniProtKB-KW"/>
</dbReference>
<dbReference type="GO" id="GO:0045227">
    <property type="term" value="P:capsule polysaccharide biosynthetic process"/>
    <property type="evidence" value="ECO:0007669"/>
    <property type="project" value="UniProtKB-UniPathway"/>
</dbReference>
<dbReference type="GO" id="GO:0071555">
    <property type="term" value="P:cell wall organization"/>
    <property type="evidence" value="ECO:0007669"/>
    <property type="project" value="UniProtKB-KW"/>
</dbReference>
<dbReference type="CDD" id="cd05233">
    <property type="entry name" value="SDR_c"/>
    <property type="match status" value="1"/>
</dbReference>
<dbReference type="FunFam" id="3.40.50.720:FF:000419">
    <property type="entry name" value="Decaprenylphosphoryl-D-2-keto erythropentose reductase"/>
    <property type="match status" value="1"/>
</dbReference>
<dbReference type="Gene3D" id="3.40.50.720">
    <property type="entry name" value="NAD(P)-binding Rossmann-like Domain"/>
    <property type="match status" value="1"/>
</dbReference>
<dbReference type="InterPro" id="IPR036291">
    <property type="entry name" value="NAD(P)-bd_dom_sf"/>
</dbReference>
<dbReference type="InterPro" id="IPR020904">
    <property type="entry name" value="Sc_DH/Rdtase_CS"/>
</dbReference>
<dbReference type="InterPro" id="IPR002347">
    <property type="entry name" value="SDR_fam"/>
</dbReference>
<dbReference type="NCBIfam" id="NF005912">
    <property type="entry name" value="PRK07904.1"/>
    <property type="match status" value="1"/>
</dbReference>
<dbReference type="PANTHER" id="PTHR43669">
    <property type="entry name" value="5-KETO-D-GLUCONATE 5-REDUCTASE"/>
    <property type="match status" value="1"/>
</dbReference>
<dbReference type="PANTHER" id="PTHR43669:SF6">
    <property type="entry name" value="DECAPRENYLPHOSPHORYL-2-KETO-BETA-D-ERYTHRO-PENTOSE REDUCTASE"/>
    <property type="match status" value="1"/>
</dbReference>
<dbReference type="Pfam" id="PF00106">
    <property type="entry name" value="adh_short"/>
    <property type="match status" value="1"/>
</dbReference>
<dbReference type="PRINTS" id="PR00081">
    <property type="entry name" value="GDHRDH"/>
</dbReference>
<dbReference type="SUPFAM" id="SSF51735">
    <property type="entry name" value="NAD(P)-binding Rossmann-fold domains"/>
    <property type="match status" value="1"/>
</dbReference>
<dbReference type="PROSITE" id="PS00061">
    <property type="entry name" value="ADH_SHORT"/>
    <property type="match status" value="1"/>
</dbReference>
<gene>
    <name evidence="3" type="primary">dprE2</name>
    <name type="ordered locus">BQ2027_MB3820</name>
</gene>
<comment type="function">
    <text evidence="3">Component of the DprE1-DprE2 complex that catalyzes the 2-step epimerization of decaprenyl-phospho-ribose (DPR) to decaprenyl-phospho-arabinose (DPA), a key precursor that serves as the arabinose donor required for the synthesis of cell-wall arabinans. DprE1 catalyzes the first step of epimerization, namely FAD-dependent oxidation of the C2' hydroxyl of DPR to yield the keto intermediate decaprenyl-phospho-2'-keto-D-arabinose (DPX). The intermediate DPX is then transferred to DprE2 subunit of the epimerase complex, most probably through a 'substrate channel' at the interface of DprE1-DprE2 complex. DprE2 then catalyzes the second step of epimerization, the NAD(+)-dependent reduction of DPX that leads to the formation of DPA.</text>
</comment>
<comment type="catalytic activity">
    <reaction evidence="1">
        <text>trans,octa-cis-decaprenylphospho-beta-D-arabinofuranose + NAD(+) = trans,octa-cis-decaprenylphospho-beta-D-erythro-pentofuranosid-2-ulose + NADH + H(+)</text>
        <dbReference type="Rhea" id="RHEA:33895"/>
        <dbReference type="ChEBI" id="CHEBI:15378"/>
        <dbReference type="ChEBI" id="CHEBI:57540"/>
        <dbReference type="ChEBI" id="CHEBI:57945"/>
        <dbReference type="ChEBI" id="CHEBI:65066"/>
        <dbReference type="ChEBI" id="CHEBI:65067"/>
        <dbReference type="EC" id="1.1.1.333"/>
    </reaction>
</comment>
<comment type="pathway">
    <text evidence="3">Cell wall biogenesis; cell wall polysaccharide biosynthesis.</text>
</comment>
<comment type="subunit">
    <text evidence="3">Interacts with DprE1 to form an epimerase complex.</text>
</comment>
<comment type="subcellular location">
    <subcellularLocation>
        <location evidence="3">Periplasm</location>
    </subcellularLocation>
</comment>
<comment type="similarity">
    <text evidence="5">Belongs to the short-chain dehydrogenases/reductases (SDR) family.</text>
</comment>
<name>DPRE2_MYCBO</name>
<organism>
    <name type="scientific">Mycobacterium bovis (strain ATCC BAA-935 / AF2122/97)</name>
    <dbReference type="NCBI Taxonomy" id="233413"/>
    <lineage>
        <taxon>Bacteria</taxon>
        <taxon>Bacillati</taxon>
        <taxon>Actinomycetota</taxon>
        <taxon>Actinomycetes</taxon>
        <taxon>Mycobacteriales</taxon>
        <taxon>Mycobacteriaceae</taxon>
        <taxon>Mycobacterium</taxon>
        <taxon>Mycobacterium tuberculosis complex</taxon>
    </lineage>
</organism>
<evidence type="ECO:0000250" key="1">
    <source>
        <dbReference type="UniProtKB" id="A0R610"/>
    </source>
</evidence>
<evidence type="ECO:0000250" key="2">
    <source>
        <dbReference type="UniProtKB" id="P00334"/>
    </source>
</evidence>
<evidence type="ECO:0000250" key="3">
    <source>
        <dbReference type="UniProtKB" id="P9WGS9"/>
    </source>
</evidence>
<evidence type="ECO:0000255" key="4">
    <source>
        <dbReference type="PROSITE-ProRule" id="PRU10001"/>
    </source>
</evidence>
<evidence type="ECO:0000305" key="5"/>
<feature type="chain" id="PRO_0000054861" description="Decaprenylphosphoryl-2-keto-beta-D-erythro-pentose reductase">
    <location>
        <begin position="1"/>
        <end position="254"/>
    </location>
</feature>
<feature type="active site" description="Proton acceptor" evidence="4">
    <location>
        <position position="160"/>
    </location>
</feature>
<feature type="binding site" evidence="2">
    <location>
        <position position="67"/>
    </location>
    <ligand>
        <name>NAD(+)</name>
        <dbReference type="ChEBI" id="CHEBI:57540"/>
    </ligand>
</feature>
<feature type="binding site" evidence="2">
    <location>
        <position position="164"/>
    </location>
    <ligand>
        <name>NAD(+)</name>
        <dbReference type="ChEBI" id="CHEBI:57540"/>
    </ligand>
</feature>
<proteinExistence type="inferred from homology"/>
<keyword id="KW-0961">Cell wall biogenesis/degradation</keyword>
<keyword id="KW-0520">NAD</keyword>
<keyword id="KW-0560">Oxidoreductase</keyword>
<keyword id="KW-0574">Periplasm</keyword>
<keyword id="KW-1185">Reference proteome</keyword>
<sequence>MVLDAVGNPQTVLLLGGTSEIGLAICERYLHNSAARIVLACLPDDPRREDAAAAMKQAGARSVELIDFDALDTDSHPKMIEAAFSGGDVDVAIVAFGLLGDAEELWQNQRKAVQIAEINYTAAVSVGVLLAEKMRAQGFGQIIAMSSAAGERVRRANFVYGSTKAGLDGFYLGLSEALREYGVRVLVIRPGQVRTRMSAHLKEAPLTVDKEYVANLAVTASAKGKELVWAPAAFRYVMMVLRHIPRSIFRKLPI</sequence>